<evidence type="ECO:0000250" key="1">
    <source>
        <dbReference type="UniProtKB" id="Q9SMV6"/>
    </source>
</evidence>
<evidence type="ECO:0000250" key="2">
    <source>
        <dbReference type="UniProtKB" id="Q9TVM2"/>
    </source>
</evidence>
<evidence type="ECO:0000255" key="3"/>
<evidence type="ECO:0000255" key="4">
    <source>
        <dbReference type="PROSITE-ProRule" id="PRU00115"/>
    </source>
</evidence>
<evidence type="ECO:0000269" key="5">
    <source>
    </source>
</evidence>
<evidence type="ECO:0000303" key="6">
    <source>
    </source>
</evidence>
<evidence type="ECO:0000305" key="7"/>
<evidence type="ECO:0000312" key="8">
    <source>
        <dbReference type="Araport" id="AT3G03110"/>
    </source>
</evidence>
<evidence type="ECO:0000312" key="9">
    <source>
        <dbReference type="EMBL" id="AAF26113.1"/>
    </source>
</evidence>
<evidence type="ECO:0000312" key="10">
    <source>
        <dbReference type="Proteomes" id="UP000006548"/>
    </source>
</evidence>
<proteinExistence type="evidence at transcript level"/>
<dbReference type="EMBL" id="AJ277542">
    <property type="protein sequence ID" value="CAC39223.1"/>
    <property type="molecule type" value="mRNA"/>
</dbReference>
<dbReference type="EMBL" id="AC012328">
    <property type="protein sequence ID" value="AAF26113.1"/>
    <property type="status" value="ALT_SEQ"/>
    <property type="molecule type" value="Genomic_DNA"/>
</dbReference>
<dbReference type="EMBL" id="CP002686">
    <property type="protein sequence ID" value="AEE73903.1"/>
    <property type="molecule type" value="Genomic_DNA"/>
</dbReference>
<dbReference type="EMBL" id="AF367278">
    <property type="protein sequence ID" value="AAK56267.1"/>
    <property type="status" value="ALT_INIT"/>
    <property type="molecule type" value="mRNA"/>
</dbReference>
<dbReference type="EMBL" id="BT004508">
    <property type="protein sequence ID" value="AAO42754.1"/>
    <property type="molecule type" value="mRNA"/>
</dbReference>
<dbReference type="EMBL" id="AK226898">
    <property type="protein sequence ID" value="BAE98975.1"/>
    <property type="status" value="ALT_INIT"/>
    <property type="molecule type" value="mRNA"/>
</dbReference>
<dbReference type="RefSeq" id="NP_566193.2">
    <property type="nucleotide sequence ID" value="NM_111181.3"/>
</dbReference>
<dbReference type="SMR" id="F4IZR5"/>
<dbReference type="FunCoup" id="F4IZR5">
    <property type="interactions" value="4756"/>
</dbReference>
<dbReference type="STRING" id="3702.F4IZR5"/>
<dbReference type="PaxDb" id="3702-AT3G03110.1"/>
<dbReference type="ProMEX" id="F4IZR5"/>
<dbReference type="ProteomicsDB" id="242526"/>
<dbReference type="EnsemblPlants" id="AT3G03110.1">
    <property type="protein sequence ID" value="AT3G03110.1"/>
    <property type="gene ID" value="AT3G03110"/>
</dbReference>
<dbReference type="GeneID" id="821074"/>
<dbReference type="Gramene" id="AT3G03110.1">
    <property type="protein sequence ID" value="AT3G03110.1"/>
    <property type="gene ID" value="AT3G03110"/>
</dbReference>
<dbReference type="KEGG" id="ath:AT3G03110"/>
<dbReference type="Araport" id="AT3G03110"/>
<dbReference type="TAIR" id="AT3G03110">
    <property type="gene designation" value="XPO1B"/>
</dbReference>
<dbReference type="eggNOG" id="KOG2020">
    <property type="taxonomic scope" value="Eukaryota"/>
</dbReference>
<dbReference type="HOGENOM" id="CLU_011906_0_0_1"/>
<dbReference type="InParanoid" id="F4IZR5"/>
<dbReference type="OMA" id="YSDPMSK"/>
<dbReference type="PRO" id="PR:F4IZR5"/>
<dbReference type="Proteomes" id="UP000006548">
    <property type="component" value="Chromosome 3"/>
</dbReference>
<dbReference type="ExpressionAtlas" id="F4IZR5">
    <property type="expression patterns" value="baseline and differential"/>
</dbReference>
<dbReference type="GO" id="GO:0031965">
    <property type="term" value="C:nuclear membrane"/>
    <property type="evidence" value="ECO:0007669"/>
    <property type="project" value="UniProtKB-SubCell"/>
</dbReference>
<dbReference type="GO" id="GO:0005643">
    <property type="term" value="C:nuclear pore"/>
    <property type="evidence" value="ECO:0007669"/>
    <property type="project" value="UniProtKB-SubCell"/>
</dbReference>
<dbReference type="GO" id="GO:0009506">
    <property type="term" value="C:plasmodesma"/>
    <property type="evidence" value="ECO:0007005"/>
    <property type="project" value="TAIR"/>
</dbReference>
<dbReference type="GO" id="GO:0005049">
    <property type="term" value="F:nuclear export signal receptor activity"/>
    <property type="evidence" value="ECO:0007669"/>
    <property type="project" value="InterPro"/>
</dbReference>
<dbReference type="GO" id="GO:0031267">
    <property type="term" value="F:small GTPase binding"/>
    <property type="evidence" value="ECO:0007669"/>
    <property type="project" value="InterPro"/>
</dbReference>
<dbReference type="GO" id="GO:0009553">
    <property type="term" value="P:embryo sac development"/>
    <property type="evidence" value="ECO:0000316"/>
    <property type="project" value="TAIR"/>
</dbReference>
<dbReference type="GO" id="GO:0051028">
    <property type="term" value="P:mRNA transport"/>
    <property type="evidence" value="ECO:0007669"/>
    <property type="project" value="UniProtKB-KW"/>
</dbReference>
<dbReference type="GO" id="GO:0009555">
    <property type="term" value="P:pollen development"/>
    <property type="evidence" value="ECO:0000316"/>
    <property type="project" value="TAIR"/>
</dbReference>
<dbReference type="GO" id="GO:0009846">
    <property type="term" value="P:pollen germination"/>
    <property type="evidence" value="ECO:0000316"/>
    <property type="project" value="TAIR"/>
</dbReference>
<dbReference type="GO" id="GO:0009860">
    <property type="term" value="P:pollen tube growth"/>
    <property type="evidence" value="ECO:0000316"/>
    <property type="project" value="TAIR"/>
</dbReference>
<dbReference type="GO" id="GO:0006611">
    <property type="term" value="P:protein export from nucleus"/>
    <property type="evidence" value="ECO:0007669"/>
    <property type="project" value="InterPro"/>
</dbReference>
<dbReference type="FunFam" id="1.25.10.10:FF:000022">
    <property type="entry name" value="protein EXPORTIN 1A"/>
    <property type="match status" value="1"/>
</dbReference>
<dbReference type="Gene3D" id="1.25.10.10">
    <property type="entry name" value="Leucine-rich Repeat Variant"/>
    <property type="match status" value="1"/>
</dbReference>
<dbReference type="InterPro" id="IPR011989">
    <property type="entry name" value="ARM-like"/>
</dbReference>
<dbReference type="InterPro" id="IPR016024">
    <property type="entry name" value="ARM-type_fold"/>
</dbReference>
<dbReference type="InterPro" id="IPR041123">
    <property type="entry name" value="CRM1_repeat"/>
</dbReference>
<dbReference type="InterPro" id="IPR041235">
    <property type="entry name" value="Exp1_repeat_2"/>
</dbReference>
<dbReference type="InterPro" id="IPR013598">
    <property type="entry name" value="Exportin-1/Importin-b-like"/>
</dbReference>
<dbReference type="InterPro" id="IPR001494">
    <property type="entry name" value="Importin-beta_N"/>
</dbReference>
<dbReference type="InterPro" id="IPR045065">
    <property type="entry name" value="XPO1/5"/>
</dbReference>
<dbReference type="InterPro" id="IPR014877">
    <property type="entry name" value="XPO1_C_dom"/>
</dbReference>
<dbReference type="InterPro" id="IPR040485">
    <property type="entry name" value="XPO1_repeat_3"/>
</dbReference>
<dbReference type="PANTHER" id="PTHR11223">
    <property type="entry name" value="EXPORTIN 1/5"/>
    <property type="match status" value="1"/>
</dbReference>
<dbReference type="PANTHER" id="PTHR11223:SF10">
    <property type="entry name" value="PROTEIN EXPORTIN 1B"/>
    <property type="match status" value="1"/>
</dbReference>
<dbReference type="Pfam" id="PF08767">
    <property type="entry name" value="CRM1_C"/>
    <property type="match status" value="1"/>
</dbReference>
<dbReference type="Pfam" id="PF18777">
    <property type="entry name" value="CRM1_repeat"/>
    <property type="match status" value="1"/>
</dbReference>
<dbReference type="Pfam" id="PF18784">
    <property type="entry name" value="CRM1_repeat_2"/>
    <property type="match status" value="1"/>
</dbReference>
<dbReference type="Pfam" id="PF18787">
    <property type="entry name" value="CRM1_repeat_3"/>
    <property type="match status" value="1"/>
</dbReference>
<dbReference type="Pfam" id="PF03810">
    <property type="entry name" value="IBN_N"/>
    <property type="match status" value="1"/>
</dbReference>
<dbReference type="Pfam" id="PF08389">
    <property type="entry name" value="Xpo1"/>
    <property type="match status" value="1"/>
</dbReference>
<dbReference type="SMART" id="SM01102">
    <property type="entry name" value="CRM1_C"/>
    <property type="match status" value="1"/>
</dbReference>
<dbReference type="SMART" id="SM00913">
    <property type="entry name" value="IBN_N"/>
    <property type="match status" value="1"/>
</dbReference>
<dbReference type="SUPFAM" id="SSF48371">
    <property type="entry name" value="ARM repeat"/>
    <property type="match status" value="1"/>
</dbReference>
<dbReference type="PROSITE" id="PS50166">
    <property type="entry name" value="IMPORTIN_B_NT"/>
    <property type="match status" value="1"/>
</dbReference>
<accession>F4IZR5</accession>
<accession>Q0WV73</accession>
<accession>Q94IV0</accession>
<accession>Q94KD5</accession>
<accession>Q9M9N0</accession>
<organism evidence="10">
    <name type="scientific">Arabidopsis thaliana</name>
    <name type="common">Mouse-ear cress</name>
    <dbReference type="NCBI Taxonomy" id="3702"/>
    <lineage>
        <taxon>Eukaryota</taxon>
        <taxon>Viridiplantae</taxon>
        <taxon>Streptophyta</taxon>
        <taxon>Embryophyta</taxon>
        <taxon>Tracheophyta</taxon>
        <taxon>Spermatophyta</taxon>
        <taxon>Magnoliopsida</taxon>
        <taxon>eudicotyledons</taxon>
        <taxon>Gunneridae</taxon>
        <taxon>Pentapetalae</taxon>
        <taxon>rosids</taxon>
        <taxon>malvids</taxon>
        <taxon>Brassicales</taxon>
        <taxon>Brassicaceae</taxon>
        <taxon>Camelineae</taxon>
        <taxon>Arabidopsis</taxon>
    </lineage>
</organism>
<keyword id="KW-0217">Developmental protein</keyword>
<keyword id="KW-0472">Membrane</keyword>
<keyword id="KW-0509">mRNA transport</keyword>
<keyword id="KW-0906">Nuclear pore complex</keyword>
<keyword id="KW-0539">Nucleus</keyword>
<keyword id="KW-0653">Protein transport</keyword>
<keyword id="KW-1185">Reference proteome</keyword>
<keyword id="KW-0677">Repeat</keyword>
<keyword id="KW-0811">Translocation</keyword>
<keyword id="KW-0813">Transport</keyword>
<name>XPO1B_ARATH</name>
<sequence length="1076" mass="123193">MAAEKLRDLSQPIDVVLLDATVEAFYSTGSKEERASADNILRDLKANPDTWLQVVHILQNTSSTHTKFFALQVLEGVIKYRWNALPVEQRDGMKNYISDVIVQLSRDEASFRTERLYVNKLNIILVQIVKQEWPAKWKSFIPDLVIAAKTSETICENCMAILKLLSEEVFDFSKGEMTQQKIKELKQSLNSEFQLIHELCLYVLSASQRQELIRATLSALHAYLSWIPLGYIFESPLLEILLKFFPVPAYRNLTLQCLSEVASLNFGDFYDMQYVKMYSIFMNQLQAILPLNLNIPEAYSTGSSEEQAFIQNLALFFTSFFKLHIKILESAPENISLLLAGLGYLISISYVDDTEVFKVCLDYWNSLVLELFGTRHHACHPALTPSLFGLQMAFLPSTVDGVKSEVTERQKLYSDPMSKLRGLMISRTAKPEEVLIVEDENGNIVRETMKDNDVLVQYKIMRETLIYLSHLDHEDTEKQMLSKLSKQLSGEEWAWNNLNTLCWAIGSISGSMVVEQENRFLVMVIRDLLSLCEVVKGKDNKAVIASNIMYVVGQYSRFLRAHWKFLKTVVHKLFEFMHETHPGVQDMACDTFLKIVQKCKRKFVIVQVGESEPFVSELLSGLATIVGDLQPHQIHTFYESVGSMIQAESDPQKRGEYLQRLMALPNQKWAEIIGQARQSADILKEPDVIRTVLNILQTNTRVATSLGTFFLSQISLIFLDMLNVYRMYSELVSSSIANGGPYASRTSLVKLLRSVKREILKLIETFLDKAENQPHIGKQFVPPMMDQVLGDYARNVPDARESEVLSLFATIINKYKVVMRDEVPLIFEAVFQCTLEMITKNFEDYPEHRLKFFSLLRAIATFCFRALIQLSSEQLKLVMDSVIWAFRHTERNIAETGLNLLLEMLKNFQKSDFCNKFYQTYFLQIEQEVFAVLTDTFHKPGFKLHVLVLQHLFSLVESGSLAEPLWDAATVPHPYSNNVAFVLEYTTKLLSSSFPNMTTTEVTQFVNGLYESRNDVGRFKDNIRDFLIQSKEFSAQDNKDLYAEEAAAQMERERQRMLSIPGLIAPSEIQDDMADS</sequence>
<feature type="chain" id="PRO_0000432146" description="Protein EXPORTIN 1B">
    <location>
        <begin position="1"/>
        <end position="1076"/>
    </location>
</feature>
<feature type="domain" description="Importin N-terminal" evidence="4">
    <location>
        <begin position="37"/>
        <end position="103"/>
    </location>
</feature>
<feature type="repeat" description="HEAT 1" evidence="3">
    <location>
        <begin position="135"/>
        <end position="171"/>
    </location>
</feature>
<feature type="repeat" description="HEAT 2" evidence="3">
    <location>
        <begin position="232"/>
        <end position="267"/>
    </location>
</feature>
<feature type="repeat" description="HEAT 3" evidence="3">
    <location>
        <begin position="282"/>
        <end position="319"/>
    </location>
</feature>
<feature type="repeat" description="HEAT 4" evidence="3">
    <location>
        <begin position="475"/>
        <end position="514"/>
    </location>
</feature>
<feature type="repeat" description="HEAT 5" evidence="3">
    <location>
        <begin position="564"/>
        <end position="601"/>
    </location>
</feature>
<feature type="repeat" description="HEAT 6" evidence="3">
    <location>
        <begin position="613"/>
        <end position="650"/>
    </location>
</feature>
<feature type="repeat" description="HEAT 7" evidence="3">
    <location>
        <begin position="683"/>
        <end position="720"/>
    </location>
</feature>
<feature type="repeat" description="HEAT 8" evidence="3">
    <location>
        <begin position="757"/>
        <end position="794"/>
    </location>
</feature>
<feature type="repeat" description="HEAT 9" evidence="3">
    <location>
        <begin position="799"/>
        <end position="836"/>
    </location>
</feature>
<feature type="repeat" description="HEAT 10" evidence="3">
    <location>
        <begin position="895"/>
        <end position="935"/>
    </location>
</feature>
<feature type="repeat" description="HEAT 11" evidence="3">
    <location>
        <begin position="943"/>
        <end position="988"/>
    </location>
</feature>
<feature type="sequence conflict" description="In Ref. 1; CAC39223." evidence="7" ref="1">
    <original>P</original>
    <variation>S</variation>
    <location>
        <position position="940"/>
    </location>
</feature>
<protein>
    <recommendedName>
        <fullName evidence="6">Protein EXPORTIN 1B</fullName>
    </recommendedName>
</protein>
<gene>
    <name evidence="6" type="primary">XPO1B</name>
    <name evidence="8" type="ordered locus">At3g03110</name>
    <name evidence="9" type="ORF">T17B22.20</name>
</gene>
<reference key="1">
    <citation type="submission" date="2000-04" db="EMBL/GenBank/DDBJ databases">
        <title>Arabidopsis thaliana contains two genes expressing functional Exportin 1 proteins.</title>
        <authorList>
            <person name="Haasen D."/>
            <person name="Merkle T."/>
        </authorList>
    </citation>
    <scope>NUCLEOTIDE SEQUENCE [MRNA]</scope>
    <source>
        <strain>cv. Columbia</strain>
    </source>
</reference>
<reference key="2">
    <citation type="journal article" date="2000" name="Nature">
        <title>Sequence and analysis of chromosome 3 of the plant Arabidopsis thaliana.</title>
        <authorList>
            <person name="Salanoubat M."/>
            <person name="Lemcke K."/>
            <person name="Rieger M."/>
            <person name="Ansorge W."/>
            <person name="Unseld M."/>
            <person name="Fartmann B."/>
            <person name="Valle G."/>
            <person name="Bloecker H."/>
            <person name="Perez-Alonso M."/>
            <person name="Obermaier B."/>
            <person name="Delseny M."/>
            <person name="Boutry M."/>
            <person name="Grivell L.A."/>
            <person name="Mache R."/>
            <person name="Puigdomenech P."/>
            <person name="De Simone V."/>
            <person name="Choisne N."/>
            <person name="Artiguenave F."/>
            <person name="Robert C."/>
            <person name="Brottier P."/>
            <person name="Wincker P."/>
            <person name="Cattolico L."/>
            <person name="Weissenbach J."/>
            <person name="Saurin W."/>
            <person name="Quetier F."/>
            <person name="Schaefer M."/>
            <person name="Mueller-Auer S."/>
            <person name="Gabel C."/>
            <person name="Fuchs M."/>
            <person name="Benes V."/>
            <person name="Wurmbach E."/>
            <person name="Drzonek H."/>
            <person name="Erfle H."/>
            <person name="Jordan N."/>
            <person name="Bangert S."/>
            <person name="Wiedelmann R."/>
            <person name="Kranz H."/>
            <person name="Voss H."/>
            <person name="Holland R."/>
            <person name="Brandt P."/>
            <person name="Nyakatura G."/>
            <person name="Vezzi A."/>
            <person name="D'Angelo M."/>
            <person name="Pallavicini A."/>
            <person name="Toppo S."/>
            <person name="Simionati B."/>
            <person name="Conrad A."/>
            <person name="Hornischer K."/>
            <person name="Kauer G."/>
            <person name="Loehnert T.-H."/>
            <person name="Nordsiek G."/>
            <person name="Reichelt J."/>
            <person name="Scharfe M."/>
            <person name="Schoen O."/>
            <person name="Bargues M."/>
            <person name="Terol J."/>
            <person name="Climent J."/>
            <person name="Navarro P."/>
            <person name="Collado C."/>
            <person name="Perez-Perez A."/>
            <person name="Ottenwaelder B."/>
            <person name="Duchemin D."/>
            <person name="Cooke R."/>
            <person name="Laudie M."/>
            <person name="Berger-Llauro C."/>
            <person name="Purnelle B."/>
            <person name="Masuy D."/>
            <person name="de Haan M."/>
            <person name="Maarse A.C."/>
            <person name="Alcaraz J.-P."/>
            <person name="Cottet A."/>
            <person name="Casacuberta E."/>
            <person name="Monfort A."/>
            <person name="Argiriou A."/>
            <person name="Flores M."/>
            <person name="Liguori R."/>
            <person name="Vitale D."/>
            <person name="Mannhaupt G."/>
            <person name="Haase D."/>
            <person name="Schoof H."/>
            <person name="Rudd S."/>
            <person name="Zaccaria P."/>
            <person name="Mewes H.-W."/>
            <person name="Mayer K.F.X."/>
            <person name="Kaul S."/>
            <person name="Town C.D."/>
            <person name="Koo H.L."/>
            <person name="Tallon L.J."/>
            <person name="Jenkins J."/>
            <person name="Rooney T."/>
            <person name="Rizzo M."/>
            <person name="Walts A."/>
            <person name="Utterback T."/>
            <person name="Fujii C.Y."/>
            <person name="Shea T.P."/>
            <person name="Creasy T.H."/>
            <person name="Haas B."/>
            <person name="Maiti R."/>
            <person name="Wu D."/>
            <person name="Peterson J."/>
            <person name="Van Aken S."/>
            <person name="Pai G."/>
            <person name="Militscher J."/>
            <person name="Sellers P."/>
            <person name="Gill J.E."/>
            <person name="Feldblyum T.V."/>
            <person name="Preuss D."/>
            <person name="Lin X."/>
            <person name="Nierman W.C."/>
            <person name="Salzberg S.L."/>
            <person name="White O."/>
            <person name="Venter J.C."/>
            <person name="Fraser C.M."/>
            <person name="Kaneko T."/>
            <person name="Nakamura Y."/>
            <person name="Sato S."/>
            <person name="Kato T."/>
            <person name="Asamizu E."/>
            <person name="Sasamoto S."/>
            <person name="Kimura T."/>
            <person name="Idesawa K."/>
            <person name="Kawashima K."/>
            <person name="Kishida Y."/>
            <person name="Kiyokawa C."/>
            <person name="Kohara M."/>
            <person name="Matsumoto M."/>
            <person name="Matsuno A."/>
            <person name="Muraki A."/>
            <person name="Nakayama S."/>
            <person name="Nakazaki N."/>
            <person name="Shinpo S."/>
            <person name="Takeuchi C."/>
            <person name="Wada T."/>
            <person name="Watanabe A."/>
            <person name="Yamada M."/>
            <person name="Yasuda M."/>
            <person name="Tabata S."/>
        </authorList>
    </citation>
    <scope>NUCLEOTIDE SEQUENCE [LARGE SCALE GENOMIC DNA]</scope>
    <source>
        <strain>cv. Columbia</strain>
    </source>
</reference>
<reference key="3">
    <citation type="journal article" date="2017" name="Plant J.">
        <title>Araport11: a complete reannotation of the Arabidopsis thaliana reference genome.</title>
        <authorList>
            <person name="Cheng C.Y."/>
            <person name="Krishnakumar V."/>
            <person name="Chan A.P."/>
            <person name="Thibaud-Nissen F."/>
            <person name="Schobel S."/>
            <person name="Town C.D."/>
        </authorList>
    </citation>
    <scope>GENOME REANNOTATION</scope>
    <source>
        <strain>cv. Columbia</strain>
    </source>
</reference>
<reference key="4">
    <citation type="journal article" date="2003" name="Science">
        <title>Empirical analysis of transcriptional activity in the Arabidopsis genome.</title>
        <authorList>
            <person name="Yamada K."/>
            <person name="Lim J."/>
            <person name="Dale J.M."/>
            <person name="Chen H."/>
            <person name="Shinn P."/>
            <person name="Palm C.J."/>
            <person name="Southwick A.M."/>
            <person name="Wu H.C."/>
            <person name="Kim C.J."/>
            <person name="Nguyen M."/>
            <person name="Pham P.K."/>
            <person name="Cheuk R.F."/>
            <person name="Karlin-Newmann G."/>
            <person name="Liu S.X."/>
            <person name="Lam B."/>
            <person name="Sakano H."/>
            <person name="Wu T."/>
            <person name="Yu G."/>
            <person name="Miranda M."/>
            <person name="Quach H.L."/>
            <person name="Tripp M."/>
            <person name="Chang C.H."/>
            <person name="Lee J.M."/>
            <person name="Toriumi M.J."/>
            <person name="Chan M.M."/>
            <person name="Tang C.C."/>
            <person name="Onodera C.S."/>
            <person name="Deng J.M."/>
            <person name="Akiyama K."/>
            <person name="Ansari Y."/>
            <person name="Arakawa T."/>
            <person name="Banh J."/>
            <person name="Banno F."/>
            <person name="Bowser L."/>
            <person name="Brooks S.Y."/>
            <person name="Carninci P."/>
            <person name="Chao Q."/>
            <person name="Choy N."/>
            <person name="Enju A."/>
            <person name="Goldsmith A.D."/>
            <person name="Gurjal M."/>
            <person name="Hansen N.F."/>
            <person name="Hayashizaki Y."/>
            <person name="Johnson-Hopson C."/>
            <person name="Hsuan V.W."/>
            <person name="Iida K."/>
            <person name="Karnes M."/>
            <person name="Khan S."/>
            <person name="Koesema E."/>
            <person name="Ishida J."/>
            <person name="Jiang P.X."/>
            <person name="Jones T."/>
            <person name="Kawai J."/>
            <person name="Kamiya A."/>
            <person name="Meyers C."/>
            <person name="Nakajima M."/>
            <person name="Narusaka M."/>
            <person name="Seki M."/>
            <person name="Sakurai T."/>
            <person name="Satou M."/>
            <person name="Tamse R."/>
            <person name="Vaysberg M."/>
            <person name="Wallender E.K."/>
            <person name="Wong C."/>
            <person name="Yamamura Y."/>
            <person name="Yuan S."/>
            <person name="Shinozaki K."/>
            <person name="Davis R.W."/>
            <person name="Theologis A."/>
            <person name="Ecker J.R."/>
        </authorList>
    </citation>
    <scope>NUCLEOTIDE SEQUENCE [LARGE SCALE MRNA] OF 678-1076</scope>
    <source>
        <strain>cv. Columbia</strain>
    </source>
</reference>
<reference key="5">
    <citation type="submission" date="2006-07" db="EMBL/GenBank/DDBJ databases">
        <title>Large-scale analysis of RIKEN Arabidopsis full-length (RAFL) cDNAs.</title>
        <authorList>
            <person name="Totoki Y."/>
            <person name="Seki M."/>
            <person name="Ishida J."/>
            <person name="Nakajima M."/>
            <person name="Enju A."/>
            <person name="Kamiya A."/>
            <person name="Narusaka M."/>
            <person name="Shin-i T."/>
            <person name="Nakagawa M."/>
            <person name="Sakamoto N."/>
            <person name="Oishi K."/>
            <person name="Kohara Y."/>
            <person name="Kobayashi M."/>
            <person name="Toyoda A."/>
            <person name="Sakaki Y."/>
            <person name="Sakurai T."/>
            <person name="Iida K."/>
            <person name="Akiyama K."/>
            <person name="Satou M."/>
            <person name="Toyoda T."/>
            <person name="Konagaya A."/>
            <person name="Carninci P."/>
            <person name="Kawai J."/>
            <person name="Hayashizaki Y."/>
            <person name="Shinozaki K."/>
        </authorList>
    </citation>
    <scope>NUCLEOTIDE SEQUENCE [LARGE SCALE MRNA] OF 678-1076</scope>
    <source>
        <strain>cv. Columbia</strain>
    </source>
</reference>
<reference key="6">
    <citation type="journal article" date="2008" name="Genetics">
        <title>Exportin1 genes are essential for development and function of the gametophytes in Arabidopsis thaliana.</title>
        <authorList>
            <person name="Blanvillain R."/>
            <person name="Boavida L.C."/>
            <person name="McCormick S."/>
            <person name="Ow D.W."/>
        </authorList>
    </citation>
    <scope>FUNCTION</scope>
    <scope>DISRUPTION PHENOTYPE</scope>
    <scope>TISSUE SPECIFICITY</scope>
</reference>
<comment type="function">
    <text evidence="1 5">Receptor for the leucine-rich nuclear export signal (NES). Binds cooperatively to the NES on its target protein and to the small GTPase Ran in its active GTP-bound form (By similarity). Required for the maternal-to-embryonic transition and during gametophyte development (PubMed:18791220).</text>
</comment>
<comment type="subcellular location">
    <subcellularLocation>
        <location evidence="2">Nucleus</location>
        <location evidence="2">Nuclear pore complex</location>
    </subcellularLocation>
    <subcellularLocation>
        <location evidence="2">Nucleus membrane</location>
        <topology evidence="2">Peripheral membrane protein</topology>
        <orientation evidence="2">Nucleoplasmic side</orientation>
    </subcellularLocation>
</comment>
<comment type="tissue specificity">
    <text evidence="5">Present in mature pollen grains, unpollinated pistils, and 2-week-old seedlings.</text>
</comment>
<comment type="disruption phenotype">
    <text evidence="5">Gametophyte defective when both XPO1A and XPO1B are disrupted. Abnormal pollen germination and tube growth, impaired female gametophyte development and embryo lethal.</text>
</comment>
<comment type="similarity">
    <text evidence="7">Belongs to the exportin family.</text>
</comment>
<comment type="sequence caution" evidence="7">
    <conflict type="erroneous gene model prediction">
        <sequence resource="EMBL-CDS" id="AAF26113"/>
    </conflict>
</comment>
<comment type="sequence caution" evidence="7">
    <conflict type="erroneous initiation">
        <sequence resource="EMBL-CDS" id="AAK56267"/>
    </conflict>
    <text>Truncated N-terminus.</text>
</comment>
<comment type="sequence caution" evidence="7">
    <conflict type="erroneous initiation">
        <sequence resource="EMBL-CDS" id="BAE98975"/>
    </conflict>
    <text>Extended N-terminus.</text>
</comment>